<organism>
    <name type="scientific">Staphylococcus aureus (strain MRSA252)</name>
    <dbReference type="NCBI Taxonomy" id="282458"/>
    <lineage>
        <taxon>Bacteria</taxon>
        <taxon>Bacillati</taxon>
        <taxon>Bacillota</taxon>
        <taxon>Bacilli</taxon>
        <taxon>Bacillales</taxon>
        <taxon>Staphylococcaceae</taxon>
        <taxon>Staphylococcus</taxon>
    </lineage>
</organism>
<feature type="chain" id="PRO_0000162525" description="Arsenate reductase">
    <location>
        <begin position="1"/>
        <end position="131"/>
    </location>
</feature>
<feature type="active site" description="Nucleophile" evidence="1">
    <location>
        <position position="10"/>
    </location>
</feature>
<feature type="active site" description="Nucleophile" evidence="1">
    <location>
        <position position="82"/>
    </location>
</feature>
<feature type="active site" description="Nucleophile" evidence="1">
    <location>
        <position position="89"/>
    </location>
</feature>
<feature type="disulfide bond" description="Redox-active; alternate" evidence="1">
    <location>
        <begin position="10"/>
        <end position="82"/>
    </location>
</feature>
<feature type="disulfide bond" description="Redox-active; alternate" evidence="1">
    <location>
        <begin position="82"/>
        <end position="89"/>
    </location>
</feature>
<name>ARSC_STAAR</name>
<gene>
    <name evidence="1" type="primary">arsC</name>
    <name type="ordered locus">SAR0692</name>
</gene>
<comment type="function">
    <text evidence="1">Catalyzes the reduction of arsenate [As(V)] to arsenite [As(III)].</text>
</comment>
<comment type="catalytic activity">
    <reaction evidence="1">
        <text>arsenate + [thioredoxin]-dithiol + H(+) = arsenite + [thioredoxin]-disulfide + H2O</text>
        <dbReference type="Rhea" id="RHEA:43848"/>
        <dbReference type="Rhea" id="RHEA-COMP:10698"/>
        <dbReference type="Rhea" id="RHEA-COMP:10700"/>
        <dbReference type="ChEBI" id="CHEBI:15377"/>
        <dbReference type="ChEBI" id="CHEBI:15378"/>
        <dbReference type="ChEBI" id="CHEBI:29242"/>
        <dbReference type="ChEBI" id="CHEBI:29950"/>
        <dbReference type="ChEBI" id="CHEBI:48597"/>
        <dbReference type="ChEBI" id="CHEBI:50058"/>
        <dbReference type="EC" id="1.20.4.4"/>
    </reaction>
</comment>
<comment type="subcellular location">
    <subcellularLocation>
        <location evidence="1">Cytoplasm</location>
    </subcellularLocation>
</comment>
<comment type="similarity">
    <text evidence="1">Belongs to the low molecular weight phosphotyrosine protein phosphatase family. Thioredoxin-coupled ArsC subfamily.</text>
</comment>
<proteinExistence type="inferred from homology"/>
<reference key="1">
    <citation type="journal article" date="2004" name="Proc. Natl. Acad. Sci. U.S.A.">
        <title>Complete genomes of two clinical Staphylococcus aureus strains: evidence for the rapid evolution of virulence and drug resistance.</title>
        <authorList>
            <person name="Holden M.T.G."/>
            <person name="Feil E.J."/>
            <person name="Lindsay J.A."/>
            <person name="Peacock S.J."/>
            <person name="Day N.P.J."/>
            <person name="Enright M.C."/>
            <person name="Foster T.J."/>
            <person name="Moore C.E."/>
            <person name="Hurst L."/>
            <person name="Atkin R."/>
            <person name="Barron A."/>
            <person name="Bason N."/>
            <person name="Bentley S.D."/>
            <person name="Chillingworth C."/>
            <person name="Chillingworth T."/>
            <person name="Churcher C."/>
            <person name="Clark L."/>
            <person name="Corton C."/>
            <person name="Cronin A."/>
            <person name="Doggett J."/>
            <person name="Dowd L."/>
            <person name="Feltwell T."/>
            <person name="Hance Z."/>
            <person name="Harris B."/>
            <person name="Hauser H."/>
            <person name="Holroyd S."/>
            <person name="Jagels K."/>
            <person name="James K.D."/>
            <person name="Lennard N."/>
            <person name="Line A."/>
            <person name="Mayes R."/>
            <person name="Moule S."/>
            <person name="Mungall K."/>
            <person name="Ormond D."/>
            <person name="Quail M.A."/>
            <person name="Rabbinowitsch E."/>
            <person name="Rutherford K.M."/>
            <person name="Sanders M."/>
            <person name="Sharp S."/>
            <person name="Simmonds M."/>
            <person name="Stevens K."/>
            <person name="Whitehead S."/>
            <person name="Barrell B.G."/>
            <person name="Spratt B.G."/>
            <person name="Parkhill J."/>
        </authorList>
    </citation>
    <scope>NUCLEOTIDE SEQUENCE [LARGE SCALE GENOMIC DNA]</scope>
    <source>
        <strain>MRSA252</strain>
    </source>
</reference>
<dbReference type="EC" id="1.20.4.4" evidence="1"/>
<dbReference type="EMBL" id="BX571856">
    <property type="protein sequence ID" value="CAG39708.1"/>
    <property type="molecule type" value="Genomic_DNA"/>
</dbReference>
<dbReference type="RefSeq" id="WP_000358995.1">
    <property type="nucleotide sequence ID" value="NC_002952.2"/>
</dbReference>
<dbReference type="BMRB" id="Q6GIZ3"/>
<dbReference type="SMR" id="Q6GIZ3"/>
<dbReference type="KEGG" id="sar:SAR0692"/>
<dbReference type="HOGENOM" id="CLU_071415_3_2_9"/>
<dbReference type="Proteomes" id="UP000000596">
    <property type="component" value="Chromosome"/>
</dbReference>
<dbReference type="GO" id="GO:0005737">
    <property type="term" value="C:cytoplasm"/>
    <property type="evidence" value="ECO:0007669"/>
    <property type="project" value="UniProtKB-SubCell"/>
</dbReference>
<dbReference type="GO" id="GO:0030612">
    <property type="term" value="F:arsenate reductase (thioredoxin) activity"/>
    <property type="evidence" value="ECO:0007669"/>
    <property type="project" value="UniProtKB-UniRule"/>
</dbReference>
<dbReference type="GO" id="GO:0004725">
    <property type="term" value="F:protein tyrosine phosphatase activity"/>
    <property type="evidence" value="ECO:0007669"/>
    <property type="project" value="InterPro"/>
</dbReference>
<dbReference type="GO" id="GO:0046685">
    <property type="term" value="P:response to arsenic-containing substance"/>
    <property type="evidence" value="ECO:0007669"/>
    <property type="project" value="UniProtKB-KW"/>
</dbReference>
<dbReference type="CDD" id="cd16345">
    <property type="entry name" value="LMWP_ArsC"/>
    <property type="match status" value="1"/>
</dbReference>
<dbReference type="FunFam" id="3.40.50.2300:FF:000237">
    <property type="entry name" value="Arsenate reductase"/>
    <property type="match status" value="1"/>
</dbReference>
<dbReference type="Gene3D" id="3.40.50.2300">
    <property type="match status" value="1"/>
</dbReference>
<dbReference type="HAMAP" id="MF_01624">
    <property type="entry name" value="Arsenate_reduct"/>
    <property type="match status" value="1"/>
</dbReference>
<dbReference type="InterPro" id="IPR014064">
    <property type="entry name" value="Arsenate_reductase_ArsC"/>
</dbReference>
<dbReference type="InterPro" id="IPR023485">
    <property type="entry name" value="Ptyr_pPase"/>
</dbReference>
<dbReference type="InterPro" id="IPR036196">
    <property type="entry name" value="Ptyr_pPase_sf"/>
</dbReference>
<dbReference type="NCBIfam" id="TIGR02691">
    <property type="entry name" value="arsC_pI258_fam"/>
    <property type="match status" value="1"/>
</dbReference>
<dbReference type="NCBIfam" id="NF010053">
    <property type="entry name" value="PRK13530.1"/>
    <property type="match status" value="1"/>
</dbReference>
<dbReference type="PANTHER" id="PTHR43428">
    <property type="entry name" value="ARSENATE REDUCTASE"/>
    <property type="match status" value="1"/>
</dbReference>
<dbReference type="PANTHER" id="PTHR43428:SF1">
    <property type="entry name" value="ARSENATE REDUCTASE"/>
    <property type="match status" value="1"/>
</dbReference>
<dbReference type="Pfam" id="PF01451">
    <property type="entry name" value="LMWPc"/>
    <property type="match status" value="1"/>
</dbReference>
<dbReference type="SMART" id="SM00226">
    <property type="entry name" value="LMWPc"/>
    <property type="match status" value="1"/>
</dbReference>
<dbReference type="SUPFAM" id="SSF52788">
    <property type="entry name" value="Phosphotyrosine protein phosphatases I"/>
    <property type="match status" value="1"/>
</dbReference>
<evidence type="ECO:0000255" key="1">
    <source>
        <dbReference type="HAMAP-Rule" id="MF_01624"/>
    </source>
</evidence>
<keyword id="KW-0059">Arsenical resistance</keyword>
<keyword id="KW-0963">Cytoplasm</keyword>
<keyword id="KW-1015">Disulfide bond</keyword>
<keyword id="KW-0560">Oxidoreductase</keyword>
<keyword id="KW-0676">Redox-active center</keyword>
<accession>Q6GIZ3</accession>
<protein>
    <recommendedName>
        <fullName evidence="1">Arsenate reductase</fullName>
        <ecNumber evidence="1">1.20.4.4</ecNumber>
    </recommendedName>
</protein>
<sequence length="131" mass="14813">MDKKTIYFICTGNSCRSQMAEGWGKEILGEGWNVYSAGIETHGVNPKAIEAMKEVDIDISNHTSDLIDNDILKQSDLVVTLCSDADNNCPILPPNVKKEHWGFDDPAGKEWSEFQRVRDEIKLAIEKFKLR</sequence>